<name>RF3_MACCJ</name>
<organism>
    <name type="scientific">Macrococcus caseolyticus (strain JCSC5402)</name>
    <name type="common">Macrococcoides caseolyticum</name>
    <dbReference type="NCBI Taxonomy" id="458233"/>
    <lineage>
        <taxon>Bacteria</taxon>
        <taxon>Bacillati</taxon>
        <taxon>Bacillota</taxon>
        <taxon>Bacilli</taxon>
        <taxon>Bacillales</taxon>
        <taxon>Staphylococcaceae</taxon>
        <taxon>Macrococcoides</taxon>
    </lineage>
</organism>
<gene>
    <name evidence="1" type="primary">prfC</name>
    <name type="ordered locus">MCCL_0632</name>
</gene>
<feature type="chain" id="PRO_1000193531" description="Peptide chain release factor 3">
    <location>
        <begin position="1"/>
        <end position="520"/>
    </location>
</feature>
<feature type="domain" description="tr-type G">
    <location>
        <begin position="8"/>
        <end position="273"/>
    </location>
</feature>
<feature type="binding site" evidence="1">
    <location>
        <begin position="17"/>
        <end position="24"/>
    </location>
    <ligand>
        <name>GTP</name>
        <dbReference type="ChEBI" id="CHEBI:37565"/>
    </ligand>
</feature>
<feature type="binding site" evidence="1">
    <location>
        <begin position="85"/>
        <end position="89"/>
    </location>
    <ligand>
        <name>GTP</name>
        <dbReference type="ChEBI" id="CHEBI:37565"/>
    </ligand>
</feature>
<feature type="binding site" evidence="1">
    <location>
        <begin position="139"/>
        <end position="142"/>
    </location>
    <ligand>
        <name>GTP</name>
        <dbReference type="ChEBI" id="CHEBI:37565"/>
    </ligand>
</feature>
<reference key="1">
    <citation type="journal article" date="2009" name="J. Bacteriol.">
        <title>Complete genome sequence of Macrococcus caseolyticus strain JCSCS5402, reflecting the ancestral genome of the human-pathogenic staphylococci.</title>
        <authorList>
            <person name="Baba T."/>
            <person name="Kuwahara-Arai K."/>
            <person name="Uchiyama I."/>
            <person name="Takeuchi F."/>
            <person name="Ito T."/>
            <person name="Hiramatsu K."/>
        </authorList>
    </citation>
    <scope>NUCLEOTIDE SEQUENCE [LARGE SCALE GENOMIC DNA]</scope>
    <source>
        <strain>JCSC5402</strain>
    </source>
</reference>
<dbReference type="EMBL" id="AP009484">
    <property type="protein sequence ID" value="BAH17339.1"/>
    <property type="molecule type" value="Genomic_DNA"/>
</dbReference>
<dbReference type="RefSeq" id="WP_012656540.1">
    <property type="nucleotide sequence ID" value="NC_011999.1"/>
</dbReference>
<dbReference type="SMR" id="B9EAS8"/>
<dbReference type="STRING" id="458233.MCCL_0632"/>
<dbReference type="KEGG" id="mcl:MCCL_0632"/>
<dbReference type="eggNOG" id="COG4108">
    <property type="taxonomic scope" value="Bacteria"/>
</dbReference>
<dbReference type="HOGENOM" id="CLU_002794_2_1_9"/>
<dbReference type="OrthoDB" id="9804431at2"/>
<dbReference type="Proteomes" id="UP000001383">
    <property type="component" value="Chromosome"/>
</dbReference>
<dbReference type="GO" id="GO:0005829">
    <property type="term" value="C:cytosol"/>
    <property type="evidence" value="ECO:0007669"/>
    <property type="project" value="TreeGrafter"/>
</dbReference>
<dbReference type="GO" id="GO:0005525">
    <property type="term" value="F:GTP binding"/>
    <property type="evidence" value="ECO:0007669"/>
    <property type="project" value="UniProtKB-UniRule"/>
</dbReference>
<dbReference type="GO" id="GO:0003924">
    <property type="term" value="F:GTPase activity"/>
    <property type="evidence" value="ECO:0007669"/>
    <property type="project" value="InterPro"/>
</dbReference>
<dbReference type="GO" id="GO:0016150">
    <property type="term" value="F:translation release factor activity, codon nonspecific"/>
    <property type="evidence" value="ECO:0007669"/>
    <property type="project" value="TreeGrafter"/>
</dbReference>
<dbReference type="GO" id="GO:0016149">
    <property type="term" value="F:translation release factor activity, codon specific"/>
    <property type="evidence" value="ECO:0007669"/>
    <property type="project" value="UniProtKB-UniRule"/>
</dbReference>
<dbReference type="GO" id="GO:0006449">
    <property type="term" value="P:regulation of translational termination"/>
    <property type="evidence" value="ECO:0007669"/>
    <property type="project" value="UniProtKB-UniRule"/>
</dbReference>
<dbReference type="CDD" id="cd04169">
    <property type="entry name" value="RF3"/>
    <property type="match status" value="1"/>
</dbReference>
<dbReference type="CDD" id="cd16259">
    <property type="entry name" value="RF3_III"/>
    <property type="match status" value="1"/>
</dbReference>
<dbReference type="FunFam" id="2.40.30.10:FF:000040">
    <property type="entry name" value="Peptide chain release factor 3"/>
    <property type="match status" value="1"/>
</dbReference>
<dbReference type="FunFam" id="3.30.70.3280:FF:000001">
    <property type="entry name" value="Peptide chain release factor 3"/>
    <property type="match status" value="1"/>
</dbReference>
<dbReference type="FunFam" id="3.40.50.300:FF:000542">
    <property type="entry name" value="Peptide chain release factor 3"/>
    <property type="match status" value="1"/>
</dbReference>
<dbReference type="Gene3D" id="3.40.50.300">
    <property type="entry name" value="P-loop containing nucleotide triphosphate hydrolases"/>
    <property type="match status" value="1"/>
</dbReference>
<dbReference type="Gene3D" id="3.30.70.3280">
    <property type="entry name" value="Peptide chain release factor 3, domain III"/>
    <property type="match status" value="1"/>
</dbReference>
<dbReference type="Gene3D" id="2.40.30.10">
    <property type="entry name" value="Translation factors"/>
    <property type="match status" value="1"/>
</dbReference>
<dbReference type="HAMAP" id="MF_00072">
    <property type="entry name" value="Rel_fac_3"/>
    <property type="match status" value="1"/>
</dbReference>
<dbReference type="InterPro" id="IPR053905">
    <property type="entry name" value="EF-G-like_DII"/>
</dbReference>
<dbReference type="InterPro" id="IPR035647">
    <property type="entry name" value="EFG_III/V"/>
</dbReference>
<dbReference type="InterPro" id="IPR031157">
    <property type="entry name" value="G_TR_CS"/>
</dbReference>
<dbReference type="InterPro" id="IPR027417">
    <property type="entry name" value="P-loop_NTPase"/>
</dbReference>
<dbReference type="InterPro" id="IPR004548">
    <property type="entry name" value="PrfC"/>
</dbReference>
<dbReference type="InterPro" id="IPR032090">
    <property type="entry name" value="RF3_C"/>
</dbReference>
<dbReference type="InterPro" id="IPR038467">
    <property type="entry name" value="RF3_dom_3_sf"/>
</dbReference>
<dbReference type="InterPro" id="IPR041732">
    <property type="entry name" value="RF3_GTP-bd"/>
</dbReference>
<dbReference type="InterPro" id="IPR005225">
    <property type="entry name" value="Small_GTP-bd"/>
</dbReference>
<dbReference type="InterPro" id="IPR000795">
    <property type="entry name" value="T_Tr_GTP-bd_dom"/>
</dbReference>
<dbReference type="InterPro" id="IPR009000">
    <property type="entry name" value="Transl_B-barrel_sf"/>
</dbReference>
<dbReference type="NCBIfam" id="TIGR00503">
    <property type="entry name" value="prfC"/>
    <property type="match status" value="1"/>
</dbReference>
<dbReference type="NCBIfam" id="NF001964">
    <property type="entry name" value="PRK00741.1"/>
    <property type="match status" value="1"/>
</dbReference>
<dbReference type="NCBIfam" id="TIGR00231">
    <property type="entry name" value="small_GTP"/>
    <property type="match status" value="1"/>
</dbReference>
<dbReference type="PANTHER" id="PTHR43556">
    <property type="entry name" value="PEPTIDE CHAIN RELEASE FACTOR RF3"/>
    <property type="match status" value="1"/>
</dbReference>
<dbReference type="PANTHER" id="PTHR43556:SF2">
    <property type="entry name" value="PEPTIDE CHAIN RELEASE FACTOR RF3"/>
    <property type="match status" value="1"/>
</dbReference>
<dbReference type="Pfam" id="PF22042">
    <property type="entry name" value="EF-G_D2"/>
    <property type="match status" value="1"/>
</dbReference>
<dbReference type="Pfam" id="PF00009">
    <property type="entry name" value="GTP_EFTU"/>
    <property type="match status" value="1"/>
</dbReference>
<dbReference type="Pfam" id="PF16658">
    <property type="entry name" value="RF3_C"/>
    <property type="match status" value="1"/>
</dbReference>
<dbReference type="PRINTS" id="PR00315">
    <property type="entry name" value="ELONGATNFCT"/>
</dbReference>
<dbReference type="SUPFAM" id="SSF54980">
    <property type="entry name" value="EF-G C-terminal domain-like"/>
    <property type="match status" value="1"/>
</dbReference>
<dbReference type="SUPFAM" id="SSF52540">
    <property type="entry name" value="P-loop containing nucleoside triphosphate hydrolases"/>
    <property type="match status" value="1"/>
</dbReference>
<dbReference type="SUPFAM" id="SSF50447">
    <property type="entry name" value="Translation proteins"/>
    <property type="match status" value="1"/>
</dbReference>
<dbReference type="PROSITE" id="PS00301">
    <property type="entry name" value="G_TR_1"/>
    <property type="match status" value="1"/>
</dbReference>
<dbReference type="PROSITE" id="PS51722">
    <property type="entry name" value="G_TR_2"/>
    <property type="match status" value="1"/>
</dbReference>
<sequence length="520" mass="59521">MTLREEVEIRKTFAIISHPDAGKTTLTEKLLLFGGAIREAGTVKGKKTGKFATSDWMEVEKQRGISVTSSVMQFDYDNFKINILDTPGHEDFSEDTYRTLMAVDSAVMVIDCAKGIEPQTLKLFKVCKMRGIPIFTFINKLDRVGKEPFELLEEIEKTLEIETYPMNWPIGMGQSFFGIIDRKTKTIEPFRDEENVLHLNEDYELQESHAITSDSAYEQAIEELMLVDEAGETFDKEKLMTGDLTPVFFGSALANFGVQNFLNAYVDHAPMPSGRKTESGEEISPFDESFSGFIFKIQANMNPQHRDRIAFMRIVSGAFERGMDIKMTRTDKKMKISRSTSFMADDTQTVNHAVSGDIIGLYDSGNFQIGDTLVGGNQKFQFEKLPQFTPEIFMKVSPKNVMKQKHFHKGIEQLVQEGAIQLYRTLHTNQIILGAVGQLQFEVFEHRMNNEYNVDVIMEPVGRKIARWIENEADIRDAMNSSRSILVEDRFENKVFLFENEFATRWFLDKFPEIKLYSLL</sequence>
<accession>B9EAS8</accession>
<proteinExistence type="inferred from homology"/>
<protein>
    <recommendedName>
        <fullName evidence="1">Peptide chain release factor 3</fullName>
        <shortName evidence="1">RF-3</shortName>
    </recommendedName>
</protein>
<comment type="function">
    <text evidence="1">Increases the formation of ribosomal termination complexes and stimulates activities of RF-1 and RF-2. It binds guanine nucleotides and has strong preference for UGA stop codons. It may interact directly with the ribosome. The stimulation of RF-1 and RF-2 is significantly reduced by GTP and GDP, but not by GMP.</text>
</comment>
<comment type="subcellular location">
    <subcellularLocation>
        <location evidence="1">Cytoplasm</location>
    </subcellularLocation>
</comment>
<comment type="similarity">
    <text evidence="1">Belongs to the TRAFAC class translation factor GTPase superfamily. Classic translation factor GTPase family. PrfC subfamily.</text>
</comment>
<keyword id="KW-0963">Cytoplasm</keyword>
<keyword id="KW-0342">GTP-binding</keyword>
<keyword id="KW-0547">Nucleotide-binding</keyword>
<keyword id="KW-0648">Protein biosynthesis</keyword>
<keyword id="KW-1185">Reference proteome</keyword>
<evidence type="ECO:0000255" key="1">
    <source>
        <dbReference type="HAMAP-Rule" id="MF_00072"/>
    </source>
</evidence>